<sequence length="335" mass="35174">MKRIAVLTSGGDAPGMNAAIRAVVRQAISEGMEVFGIYDGYAGMVAGEIHPLDAASVGDIISRGGTFLHSARYPEFAQLEGQLKGIEQLKKHGIEGVVVIGGDGSYHGAMRLTEHGFPAIGLPGTIDNDIVGTDFTIGFDTAVTTAMDAIDKIRDTSSSHRRTFVIEVMGRNAGDIALWAGIATGADEIIIPEAGFKMEDIVASIKAGYECGKKHNIIVLAEGVMSAAEFGQKLKEAGDTSDLRVTELGHIQRGGSPTARDRVLASRMGAHAVKLLKEGIGGVAVGIRNEKMVENPILGTAEEGALFSLTAEGKIVVNNPHKADIELSSLNKSLS</sequence>
<evidence type="ECO:0000255" key="1">
    <source>
        <dbReference type="HAMAP-Rule" id="MF_00339"/>
    </source>
</evidence>
<accession>C1CJY4</accession>
<comment type="function">
    <text evidence="1">Catalyzes the phosphorylation of D-fructose 6-phosphate to fructose 1,6-bisphosphate by ATP, the first committing step of glycolysis.</text>
</comment>
<comment type="catalytic activity">
    <reaction evidence="1">
        <text>beta-D-fructose 6-phosphate + ATP = beta-D-fructose 1,6-bisphosphate + ADP + H(+)</text>
        <dbReference type="Rhea" id="RHEA:16109"/>
        <dbReference type="ChEBI" id="CHEBI:15378"/>
        <dbReference type="ChEBI" id="CHEBI:30616"/>
        <dbReference type="ChEBI" id="CHEBI:32966"/>
        <dbReference type="ChEBI" id="CHEBI:57634"/>
        <dbReference type="ChEBI" id="CHEBI:456216"/>
        <dbReference type="EC" id="2.7.1.11"/>
    </reaction>
</comment>
<comment type="cofactor">
    <cofactor evidence="1">
        <name>Mg(2+)</name>
        <dbReference type="ChEBI" id="CHEBI:18420"/>
    </cofactor>
</comment>
<comment type="activity regulation">
    <text evidence="1">Allosterically activated by ADP and other diphosphonucleosides, and allosterically inhibited by phosphoenolpyruvate.</text>
</comment>
<comment type="pathway">
    <text evidence="1">Carbohydrate degradation; glycolysis; D-glyceraldehyde 3-phosphate and glycerone phosphate from D-glucose: step 3/4.</text>
</comment>
<comment type="subunit">
    <text evidence="1">Homotetramer.</text>
</comment>
<comment type="subcellular location">
    <subcellularLocation>
        <location evidence="1">Cytoplasm</location>
    </subcellularLocation>
</comment>
<comment type="similarity">
    <text evidence="1">Belongs to the phosphofructokinase type A (PFKA) family. ATP-dependent PFK group I subfamily. Prokaryotic clade 'B1' sub-subfamily.</text>
</comment>
<organism>
    <name type="scientific">Streptococcus pneumoniae (strain P1031)</name>
    <dbReference type="NCBI Taxonomy" id="488223"/>
    <lineage>
        <taxon>Bacteria</taxon>
        <taxon>Bacillati</taxon>
        <taxon>Bacillota</taxon>
        <taxon>Bacilli</taxon>
        <taxon>Lactobacillales</taxon>
        <taxon>Streptococcaceae</taxon>
        <taxon>Streptococcus</taxon>
    </lineage>
</organism>
<feature type="chain" id="PRO_1000133287" description="ATP-dependent 6-phosphofructokinase">
    <location>
        <begin position="1"/>
        <end position="335"/>
    </location>
</feature>
<feature type="active site" description="Proton acceptor" evidence="1">
    <location>
        <position position="127"/>
    </location>
</feature>
<feature type="binding site" evidence="1">
    <location>
        <position position="11"/>
    </location>
    <ligand>
        <name>ATP</name>
        <dbReference type="ChEBI" id="CHEBI:30616"/>
    </ligand>
</feature>
<feature type="binding site" evidence="1">
    <location>
        <begin position="21"/>
        <end position="25"/>
    </location>
    <ligand>
        <name>ADP</name>
        <dbReference type="ChEBI" id="CHEBI:456216"/>
        <note>allosteric activator; ligand shared between dimeric partners</note>
    </ligand>
</feature>
<feature type="binding site" evidence="1">
    <location>
        <begin position="72"/>
        <end position="73"/>
    </location>
    <ligand>
        <name>ATP</name>
        <dbReference type="ChEBI" id="CHEBI:30616"/>
    </ligand>
</feature>
<feature type="binding site" evidence="1">
    <location>
        <begin position="102"/>
        <end position="105"/>
    </location>
    <ligand>
        <name>ATP</name>
        <dbReference type="ChEBI" id="CHEBI:30616"/>
    </ligand>
</feature>
<feature type="binding site" evidence="1">
    <location>
        <position position="103"/>
    </location>
    <ligand>
        <name>Mg(2+)</name>
        <dbReference type="ChEBI" id="CHEBI:18420"/>
        <note>catalytic</note>
    </ligand>
</feature>
<feature type="binding site" description="in other chain" evidence="1">
    <location>
        <begin position="125"/>
        <end position="127"/>
    </location>
    <ligand>
        <name>substrate</name>
        <note>ligand shared between dimeric partners</note>
    </ligand>
</feature>
<feature type="binding site" description="in other chain" evidence="1">
    <location>
        <position position="154"/>
    </location>
    <ligand>
        <name>ADP</name>
        <dbReference type="ChEBI" id="CHEBI:456216"/>
        <note>allosteric activator; ligand shared between dimeric partners</note>
    </ligand>
</feature>
<feature type="binding site" evidence="1">
    <location>
        <position position="162"/>
    </location>
    <ligand>
        <name>substrate</name>
        <note>ligand shared between dimeric partners</note>
    </ligand>
</feature>
<feature type="binding site" description="in other chain" evidence="1">
    <location>
        <begin position="169"/>
        <end position="171"/>
    </location>
    <ligand>
        <name>substrate</name>
        <note>ligand shared between dimeric partners</note>
    </ligand>
</feature>
<feature type="binding site" description="in other chain" evidence="1">
    <location>
        <begin position="185"/>
        <end position="187"/>
    </location>
    <ligand>
        <name>ADP</name>
        <dbReference type="ChEBI" id="CHEBI:456216"/>
        <note>allosteric activator; ligand shared between dimeric partners</note>
    </ligand>
</feature>
<feature type="binding site" description="in other chain" evidence="1">
    <location>
        <begin position="213"/>
        <end position="215"/>
    </location>
    <ligand>
        <name>ADP</name>
        <dbReference type="ChEBI" id="CHEBI:456216"/>
        <note>allosteric activator; ligand shared between dimeric partners</note>
    </ligand>
</feature>
<feature type="binding site" description="in other chain" evidence="1">
    <location>
        <position position="222"/>
    </location>
    <ligand>
        <name>substrate</name>
        <note>ligand shared between dimeric partners</note>
    </ligand>
</feature>
<feature type="binding site" evidence="1">
    <location>
        <position position="244"/>
    </location>
    <ligand>
        <name>substrate</name>
        <note>ligand shared between dimeric partners</note>
    </ligand>
</feature>
<feature type="binding site" description="in other chain" evidence="1">
    <location>
        <begin position="250"/>
        <end position="253"/>
    </location>
    <ligand>
        <name>substrate</name>
        <note>ligand shared between dimeric partners</note>
    </ligand>
</feature>
<proteinExistence type="inferred from homology"/>
<name>PFKA_STRZP</name>
<protein>
    <recommendedName>
        <fullName evidence="1">ATP-dependent 6-phosphofructokinase</fullName>
        <shortName evidence="1">ATP-PFK</shortName>
        <shortName evidence="1">Phosphofructokinase</shortName>
        <ecNumber evidence="1">2.7.1.11</ecNumber>
    </recommendedName>
    <alternativeName>
        <fullName evidence="1">Phosphohexokinase</fullName>
    </alternativeName>
</protein>
<gene>
    <name evidence="1" type="primary">pfkA</name>
    <name type="ordered locus">SPP_0904</name>
</gene>
<keyword id="KW-0021">Allosteric enzyme</keyword>
<keyword id="KW-0067">ATP-binding</keyword>
<keyword id="KW-0963">Cytoplasm</keyword>
<keyword id="KW-0324">Glycolysis</keyword>
<keyword id="KW-0418">Kinase</keyword>
<keyword id="KW-0460">Magnesium</keyword>
<keyword id="KW-0479">Metal-binding</keyword>
<keyword id="KW-0547">Nucleotide-binding</keyword>
<keyword id="KW-0808">Transferase</keyword>
<reference key="1">
    <citation type="journal article" date="2010" name="Genome Biol.">
        <title>Structure and dynamics of the pan-genome of Streptococcus pneumoniae and closely related species.</title>
        <authorList>
            <person name="Donati C."/>
            <person name="Hiller N.L."/>
            <person name="Tettelin H."/>
            <person name="Muzzi A."/>
            <person name="Croucher N.J."/>
            <person name="Angiuoli S.V."/>
            <person name="Oggioni M."/>
            <person name="Dunning Hotopp J.C."/>
            <person name="Hu F.Z."/>
            <person name="Riley D.R."/>
            <person name="Covacci A."/>
            <person name="Mitchell T.J."/>
            <person name="Bentley S.D."/>
            <person name="Kilian M."/>
            <person name="Ehrlich G.D."/>
            <person name="Rappuoli R."/>
            <person name="Moxon E.R."/>
            <person name="Masignani V."/>
        </authorList>
    </citation>
    <scope>NUCLEOTIDE SEQUENCE [LARGE SCALE GENOMIC DNA]</scope>
    <source>
        <strain>P1031</strain>
    </source>
</reference>
<dbReference type="EC" id="2.7.1.11" evidence="1"/>
<dbReference type="EMBL" id="CP000920">
    <property type="protein sequence ID" value="ACO21062.1"/>
    <property type="molecule type" value="Genomic_DNA"/>
</dbReference>
<dbReference type="RefSeq" id="WP_000820852.1">
    <property type="nucleotide sequence ID" value="NC_012467.1"/>
</dbReference>
<dbReference type="SMR" id="C1CJY4"/>
<dbReference type="GeneID" id="45653754"/>
<dbReference type="KEGG" id="spp:SPP_0904"/>
<dbReference type="HOGENOM" id="CLU_020655_0_1_9"/>
<dbReference type="UniPathway" id="UPA00109">
    <property type="reaction ID" value="UER00182"/>
</dbReference>
<dbReference type="GO" id="GO:0005945">
    <property type="term" value="C:6-phosphofructokinase complex"/>
    <property type="evidence" value="ECO:0007669"/>
    <property type="project" value="TreeGrafter"/>
</dbReference>
<dbReference type="GO" id="GO:0003872">
    <property type="term" value="F:6-phosphofructokinase activity"/>
    <property type="evidence" value="ECO:0007669"/>
    <property type="project" value="UniProtKB-UniRule"/>
</dbReference>
<dbReference type="GO" id="GO:0016208">
    <property type="term" value="F:AMP binding"/>
    <property type="evidence" value="ECO:0007669"/>
    <property type="project" value="TreeGrafter"/>
</dbReference>
<dbReference type="GO" id="GO:0005524">
    <property type="term" value="F:ATP binding"/>
    <property type="evidence" value="ECO:0007669"/>
    <property type="project" value="UniProtKB-KW"/>
</dbReference>
<dbReference type="GO" id="GO:0070095">
    <property type="term" value="F:fructose-6-phosphate binding"/>
    <property type="evidence" value="ECO:0007669"/>
    <property type="project" value="TreeGrafter"/>
</dbReference>
<dbReference type="GO" id="GO:0042802">
    <property type="term" value="F:identical protein binding"/>
    <property type="evidence" value="ECO:0007669"/>
    <property type="project" value="TreeGrafter"/>
</dbReference>
<dbReference type="GO" id="GO:0046872">
    <property type="term" value="F:metal ion binding"/>
    <property type="evidence" value="ECO:0007669"/>
    <property type="project" value="UniProtKB-KW"/>
</dbReference>
<dbReference type="GO" id="GO:0048029">
    <property type="term" value="F:monosaccharide binding"/>
    <property type="evidence" value="ECO:0007669"/>
    <property type="project" value="TreeGrafter"/>
</dbReference>
<dbReference type="GO" id="GO:0061621">
    <property type="term" value="P:canonical glycolysis"/>
    <property type="evidence" value="ECO:0007669"/>
    <property type="project" value="TreeGrafter"/>
</dbReference>
<dbReference type="GO" id="GO:0030388">
    <property type="term" value="P:fructose 1,6-bisphosphate metabolic process"/>
    <property type="evidence" value="ECO:0007669"/>
    <property type="project" value="TreeGrafter"/>
</dbReference>
<dbReference type="GO" id="GO:0006002">
    <property type="term" value="P:fructose 6-phosphate metabolic process"/>
    <property type="evidence" value="ECO:0007669"/>
    <property type="project" value="InterPro"/>
</dbReference>
<dbReference type="CDD" id="cd00763">
    <property type="entry name" value="Bacterial_PFK"/>
    <property type="match status" value="1"/>
</dbReference>
<dbReference type="FunFam" id="3.40.50.450:FF:000001">
    <property type="entry name" value="ATP-dependent 6-phosphofructokinase"/>
    <property type="match status" value="1"/>
</dbReference>
<dbReference type="FunFam" id="3.40.50.460:FF:000002">
    <property type="entry name" value="ATP-dependent 6-phosphofructokinase"/>
    <property type="match status" value="1"/>
</dbReference>
<dbReference type="Gene3D" id="3.40.50.450">
    <property type="match status" value="1"/>
</dbReference>
<dbReference type="Gene3D" id="3.40.50.460">
    <property type="entry name" value="Phosphofructokinase domain"/>
    <property type="match status" value="1"/>
</dbReference>
<dbReference type="HAMAP" id="MF_00339">
    <property type="entry name" value="Phosphofructokinase_I_B1"/>
    <property type="match status" value="1"/>
</dbReference>
<dbReference type="InterPro" id="IPR022953">
    <property type="entry name" value="ATP_PFK"/>
</dbReference>
<dbReference type="InterPro" id="IPR012003">
    <property type="entry name" value="ATP_PFK_prok-type"/>
</dbReference>
<dbReference type="InterPro" id="IPR012828">
    <property type="entry name" value="PFKA_ATP_prok"/>
</dbReference>
<dbReference type="InterPro" id="IPR015912">
    <property type="entry name" value="Phosphofructokinase_CS"/>
</dbReference>
<dbReference type="InterPro" id="IPR000023">
    <property type="entry name" value="Phosphofructokinase_dom"/>
</dbReference>
<dbReference type="InterPro" id="IPR035966">
    <property type="entry name" value="PKF_sf"/>
</dbReference>
<dbReference type="NCBIfam" id="TIGR02482">
    <property type="entry name" value="PFKA_ATP"/>
    <property type="match status" value="1"/>
</dbReference>
<dbReference type="NCBIfam" id="NF002872">
    <property type="entry name" value="PRK03202.1"/>
    <property type="match status" value="1"/>
</dbReference>
<dbReference type="PANTHER" id="PTHR13697:SF4">
    <property type="entry name" value="ATP-DEPENDENT 6-PHOSPHOFRUCTOKINASE"/>
    <property type="match status" value="1"/>
</dbReference>
<dbReference type="PANTHER" id="PTHR13697">
    <property type="entry name" value="PHOSPHOFRUCTOKINASE"/>
    <property type="match status" value="1"/>
</dbReference>
<dbReference type="Pfam" id="PF00365">
    <property type="entry name" value="PFK"/>
    <property type="match status" value="1"/>
</dbReference>
<dbReference type="PIRSF" id="PIRSF000532">
    <property type="entry name" value="ATP_PFK_prok"/>
    <property type="match status" value="1"/>
</dbReference>
<dbReference type="PRINTS" id="PR00476">
    <property type="entry name" value="PHFRCTKINASE"/>
</dbReference>
<dbReference type="SUPFAM" id="SSF53784">
    <property type="entry name" value="Phosphofructokinase"/>
    <property type="match status" value="1"/>
</dbReference>
<dbReference type="PROSITE" id="PS00433">
    <property type="entry name" value="PHOSPHOFRUCTOKINASE"/>
    <property type="match status" value="1"/>
</dbReference>